<protein>
    <recommendedName>
        <fullName evidence="1">Adapter protein MecA</fullName>
    </recommendedName>
</protein>
<name>MECA_LISMF</name>
<organism>
    <name type="scientific">Listeria monocytogenes serotype 4b (strain F2365)</name>
    <dbReference type="NCBI Taxonomy" id="265669"/>
    <lineage>
        <taxon>Bacteria</taxon>
        <taxon>Bacillati</taxon>
        <taxon>Bacillota</taxon>
        <taxon>Bacilli</taxon>
        <taxon>Bacillales</taxon>
        <taxon>Listeriaceae</taxon>
        <taxon>Listeria</taxon>
    </lineage>
</organism>
<accession>Q71XH5</accession>
<dbReference type="EMBL" id="AE017262">
    <property type="protein sequence ID" value="AAT04990.1"/>
    <property type="molecule type" value="Genomic_DNA"/>
</dbReference>
<dbReference type="RefSeq" id="WP_003724608.1">
    <property type="nucleotide sequence ID" value="NC_002973.6"/>
</dbReference>
<dbReference type="SMR" id="Q71XH5"/>
<dbReference type="KEGG" id="lmf:LMOf2365_2223"/>
<dbReference type="HOGENOM" id="CLU_071496_2_1_9"/>
<dbReference type="GO" id="GO:0030674">
    <property type="term" value="F:protein-macromolecule adaptor activity"/>
    <property type="evidence" value="ECO:0007669"/>
    <property type="project" value="UniProtKB-UniRule"/>
</dbReference>
<dbReference type="Gene3D" id="3.30.70.1950">
    <property type="match status" value="1"/>
</dbReference>
<dbReference type="HAMAP" id="MF_01124">
    <property type="entry name" value="MecA"/>
    <property type="match status" value="1"/>
</dbReference>
<dbReference type="InterPro" id="IPR038471">
    <property type="entry name" value="MecA_C_sf"/>
</dbReference>
<dbReference type="InterPro" id="IPR008681">
    <property type="entry name" value="Neg-reg_MecA"/>
</dbReference>
<dbReference type="NCBIfam" id="NF002644">
    <property type="entry name" value="PRK02315.1-5"/>
    <property type="match status" value="1"/>
</dbReference>
<dbReference type="PANTHER" id="PTHR39161">
    <property type="entry name" value="ADAPTER PROTEIN MECA"/>
    <property type="match status" value="1"/>
</dbReference>
<dbReference type="PANTHER" id="PTHR39161:SF1">
    <property type="entry name" value="ADAPTER PROTEIN MECA 1"/>
    <property type="match status" value="1"/>
</dbReference>
<dbReference type="Pfam" id="PF05389">
    <property type="entry name" value="MecA"/>
    <property type="match status" value="1"/>
</dbReference>
<dbReference type="PIRSF" id="PIRSF029008">
    <property type="entry name" value="MecA"/>
    <property type="match status" value="1"/>
</dbReference>
<gene>
    <name evidence="1" type="primary">mecA</name>
    <name type="ordered locus">LMOf2365_2223</name>
</gene>
<sequence length="217" mass="25355">MEIERINEDTIKFYISYLDLEERGFNQEDVWYDREKSEELFWDMMDELKYEEEFSPEGPLWIQVQALKHGLEVFVTKATIGGKGEDGFDVTLSSPDELAEEKIEKLLEENFNPVKKEALGDDDTLEFILEFRDFEDAISLSRATGLENLVTKLYSYQGKYYLNVEFPENKYDESNIDNAVSILLEYGLESNLTGYMLAEYGKVIFDVPALKQIRKHF</sequence>
<comment type="function">
    <text evidence="1">Enables the recognition and targeting of unfolded and aggregated proteins to the ClpC protease or to other proteins involved in proteolysis.</text>
</comment>
<comment type="subunit">
    <text evidence="1">Homodimer.</text>
</comment>
<comment type="domain">
    <text>The N-terminal domain probably binds unfolded/aggregated proteins; the C-terminal domain interacts with ClpC.</text>
</comment>
<comment type="similarity">
    <text evidence="1">Belongs to the MecA family.</text>
</comment>
<feature type="chain" id="PRO_0000212273" description="Adapter protein MecA">
    <location>
        <begin position="1"/>
        <end position="217"/>
    </location>
</feature>
<evidence type="ECO:0000255" key="1">
    <source>
        <dbReference type="HAMAP-Rule" id="MF_01124"/>
    </source>
</evidence>
<proteinExistence type="inferred from homology"/>
<reference key="1">
    <citation type="journal article" date="2004" name="Nucleic Acids Res.">
        <title>Whole genome comparisons of serotype 4b and 1/2a strains of the food-borne pathogen Listeria monocytogenes reveal new insights into the core genome components of this species.</title>
        <authorList>
            <person name="Nelson K.E."/>
            <person name="Fouts D.E."/>
            <person name="Mongodin E.F."/>
            <person name="Ravel J."/>
            <person name="DeBoy R.T."/>
            <person name="Kolonay J.F."/>
            <person name="Rasko D.A."/>
            <person name="Angiuoli S.V."/>
            <person name="Gill S.R."/>
            <person name="Paulsen I.T."/>
            <person name="Peterson J.D."/>
            <person name="White O."/>
            <person name="Nelson W.C."/>
            <person name="Nierman W.C."/>
            <person name="Beanan M.J."/>
            <person name="Brinkac L.M."/>
            <person name="Daugherty S.C."/>
            <person name="Dodson R.J."/>
            <person name="Durkin A.S."/>
            <person name="Madupu R."/>
            <person name="Haft D.H."/>
            <person name="Selengut J."/>
            <person name="Van Aken S.E."/>
            <person name="Khouri H.M."/>
            <person name="Fedorova N."/>
            <person name="Forberger H.A."/>
            <person name="Tran B."/>
            <person name="Kathariou S."/>
            <person name="Wonderling L.D."/>
            <person name="Uhlich G.A."/>
            <person name="Bayles D.O."/>
            <person name="Luchansky J.B."/>
            <person name="Fraser C.M."/>
        </authorList>
    </citation>
    <scope>NUCLEOTIDE SEQUENCE [LARGE SCALE GENOMIC DNA]</scope>
    <source>
        <strain>F2365</strain>
    </source>
</reference>